<comment type="function">
    <text evidence="1">This protein binds to 23S rRNA in the presence of protein L20.</text>
</comment>
<comment type="subunit">
    <text evidence="1">Part of the 50S ribosomal subunit. Contacts protein L20.</text>
</comment>
<comment type="similarity">
    <text evidence="1">Belongs to the bacterial ribosomal protein bL21 family.</text>
</comment>
<gene>
    <name evidence="1" type="primary">rplU</name>
    <name type="ordered locus">CLI_3043</name>
</gene>
<feature type="chain" id="PRO_1000067825" description="Large ribosomal subunit protein bL21">
    <location>
        <begin position="1"/>
        <end position="104"/>
    </location>
</feature>
<sequence>MYAVVVTGGKQYKVAEGDVLFVEKLTADVDSTVELDNVLLVGKDNGETVVGKPMVEGAKVTAKVLAQGKAKKVVVFKYKPKKDYRKKQGHRQPYTKIQIEKINA</sequence>
<keyword id="KW-0687">Ribonucleoprotein</keyword>
<keyword id="KW-0689">Ribosomal protein</keyword>
<keyword id="KW-0694">RNA-binding</keyword>
<keyword id="KW-0699">rRNA-binding</keyword>
<dbReference type="EMBL" id="CP000728">
    <property type="protein sequence ID" value="ABS40493.1"/>
    <property type="molecule type" value="Genomic_DNA"/>
</dbReference>
<dbReference type="RefSeq" id="WP_003357920.1">
    <property type="nucleotide sequence ID" value="NC_009699.1"/>
</dbReference>
<dbReference type="SMR" id="A7GHK5"/>
<dbReference type="KEGG" id="cbf:CLI_3043"/>
<dbReference type="HOGENOM" id="CLU_061463_3_2_9"/>
<dbReference type="Proteomes" id="UP000002410">
    <property type="component" value="Chromosome"/>
</dbReference>
<dbReference type="GO" id="GO:0005737">
    <property type="term" value="C:cytoplasm"/>
    <property type="evidence" value="ECO:0007669"/>
    <property type="project" value="UniProtKB-ARBA"/>
</dbReference>
<dbReference type="GO" id="GO:1990904">
    <property type="term" value="C:ribonucleoprotein complex"/>
    <property type="evidence" value="ECO:0007669"/>
    <property type="project" value="UniProtKB-KW"/>
</dbReference>
<dbReference type="GO" id="GO:0005840">
    <property type="term" value="C:ribosome"/>
    <property type="evidence" value="ECO:0007669"/>
    <property type="project" value="UniProtKB-KW"/>
</dbReference>
<dbReference type="GO" id="GO:0019843">
    <property type="term" value="F:rRNA binding"/>
    <property type="evidence" value="ECO:0007669"/>
    <property type="project" value="UniProtKB-UniRule"/>
</dbReference>
<dbReference type="GO" id="GO:0003735">
    <property type="term" value="F:structural constituent of ribosome"/>
    <property type="evidence" value="ECO:0007669"/>
    <property type="project" value="InterPro"/>
</dbReference>
<dbReference type="GO" id="GO:0006412">
    <property type="term" value="P:translation"/>
    <property type="evidence" value="ECO:0007669"/>
    <property type="project" value="UniProtKB-UniRule"/>
</dbReference>
<dbReference type="HAMAP" id="MF_01363">
    <property type="entry name" value="Ribosomal_bL21"/>
    <property type="match status" value="1"/>
</dbReference>
<dbReference type="InterPro" id="IPR028909">
    <property type="entry name" value="bL21-like"/>
</dbReference>
<dbReference type="InterPro" id="IPR036164">
    <property type="entry name" value="bL21-like_sf"/>
</dbReference>
<dbReference type="InterPro" id="IPR001787">
    <property type="entry name" value="Ribosomal_bL21"/>
</dbReference>
<dbReference type="InterPro" id="IPR018258">
    <property type="entry name" value="Ribosomal_bL21_CS"/>
</dbReference>
<dbReference type="NCBIfam" id="TIGR00061">
    <property type="entry name" value="L21"/>
    <property type="match status" value="1"/>
</dbReference>
<dbReference type="PANTHER" id="PTHR21349">
    <property type="entry name" value="50S RIBOSOMAL PROTEIN L21"/>
    <property type="match status" value="1"/>
</dbReference>
<dbReference type="PANTHER" id="PTHR21349:SF0">
    <property type="entry name" value="LARGE RIBOSOMAL SUBUNIT PROTEIN BL21M"/>
    <property type="match status" value="1"/>
</dbReference>
<dbReference type="Pfam" id="PF00829">
    <property type="entry name" value="Ribosomal_L21p"/>
    <property type="match status" value="1"/>
</dbReference>
<dbReference type="SUPFAM" id="SSF141091">
    <property type="entry name" value="L21p-like"/>
    <property type="match status" value="1"/>
</dbReference>
<dbReference type="PROSITE" id="PS01169">
    <property type="entry name" value="RIBOSOMAL_L21"/>
    <property type="match status" value="1"/>
</dbReference>
<protein>
    <recommendedName>
        <fullName evidence="1">Large ribosomal subunit protein bL21</fullName>
    </recommendedName>
    <alternativeName>
        <fullName evidence="2">50S ribosomal protein L21</fullName>
    </alternativeName>
</protein>
<evidence type="ECO:0000255" key="1">
    <source>
        <dbReference type="HAMAP-Rule" id="MF_01363"/>
    </source>
</evidence>
<evidence type="ECO:0000305" key="2"/>
<name>RL21_CLOBL</name>
<proteinExistence type="inferred from homology"/>
<accession>A7GHK5</accession>
<organism>
    <name type="scientific">Clostridium botulinum (strain Langeland / NCTC 10281 / Type F)</name>
    <dbReference type="NCBI Taxonomy" id="441772"/>
    <lineage>
        <taxon>Bacteria</taxon>
        <taxon>Bacillati</taxon>
        <taxon>Bacillota</taxon>
        <taxon>Clostridia</taxon>
        <taxon>Eubacteriales</taxon>
        <taxon>Clostridiaceae</taxon>
        <taxon>Clostridium</taxon>
    </lineage>
</organism>
<reference key="1">
    <citation type="submission" date="2007-06" db="EMBL/GenBank/DDBJ databases">
        <authorList>
            <person name="Brinkac L.M."/>
            <person name="Daugherty S."/>
            <person name="Dodson R.J."/>
            <person name="Madupu R."/>
            <person name="Brown J.L."/>
            <person name="Bruce D."/>
            <person name="Detter C."/>
            <person name="Munk C."/>
            <person name="Smith L.A."/>
            <person name="Smith T.J."/>
            <person name="White O."/>
            <person name="Brettin T.S."/>
        </authorList>
    </citation>
    <scope>NUCLEOTIDE SEQUENCE [LARGE SCALE GENOMIC DNA]</scope>
    <source>
        <strain>Langeland / NCTC 10281 / Type F</strain>
    </source>
</reference>